<proteinExistence type="inferred from homology"/>
<comment type="catalytic activity">
    <reaction evidence="1">
        <text>urea + 2 H2O + H(+) = hydrogencarbonate + 2 NH4(+)</text>
        <dbReference type="Rhea" id="RHEA:20557"/>
        <dbReference type="ChEBI" id="CHEBI:15377"/>
        <dbReference type="ChEBI" id="CHEBI:15378"/>
        <dbReference type="ChEBI" id="CHEBI:16199"/>
        <dbReference type="ChEBI" id="CHEBI:17544"/>
        <dbReference type="ChEBI" id="CHEBI:28938"/>
        <dbReference type="EC" id="3.5.1.5"/>
    </reaction>
</comment>
<comment type="pathway">
    <text evidence="1">Nitrogen metabolism; urea degradation; CO(2) and NH(3) from urea (urease route): step 1/1.</text>
</comment>
<comment type="subunit">
    <text evidence="1">Heterotrimer of UreA (gamma), UreB (beta) and UreC (alpha) subunits. Three heterotrimers associate to form the active enzyme.</text>
</comment>
<comment type="subcellular location">
    <subcellularLocation>
        <location evidence="1">Cytoplasm</location>
    </subcellularLocation>
</comment>
<comment type="similarity">
    <text evidence="1">Belongs to the urease beta subunit family.</text>
</comment>
<accession>A4F7F6</accession>
<evidence type="ECO:0000255" key="1">
    <source>
        <dbReference type="HAMAP-Rule" id="MF_01954"/>
    </source>
</evidence>
<evidence type="ECO:0000256" key="2">
    <source>
        <dbReference type="SAM" id="MobiDB-lite"/>
    </source>
</evidence>
<protein>
    <recommendedName>
        <fullName evidence="1">Urease subunit beta</fullName>
        <ecNumber evidence="1">3.5.1.5</ecNumber>
    </recommendedName>
    <alternativeName>
        <fullName evidence="1">Urea amidohydrolase subunit beta</fullName>
    </alternativeName>
</protein>
<keyword id="KW-0963">Cytoplasm</keyword>
<keyword id="KW-0378">Hydrolase</keyword>
<keyword id="KW-1185">Reference proteome</keyword>
<name>URE2_SACEN</name>
<organism>
    <name type="scientific">Saccharopolyspora erythraea (strain ATCC 11635 / DSM 40517 / JCM 4748 / NBRC 13426 / NCIMB 8594 / NRRL 2338)</name>
    <dbReference type="NCBI Taxonomy" id="405948"/>
    <lineage>
        <taxon>Bacteria</taxon>
        <taxon>Bacillati</taxon>
        <taxon>Actinomycetota</taxon>
        <taxon>Actinomycetes</taxon>
        <taxon>Pseudonocardiales</taxon>
        <taxon>Pseudonocardiaceae</taxon>
        <taxon>Saccharopolyspora</taxon>
    </lineage>
</organism>
<feature type="chain" id="PRO_1000070773" description="Urease subunit beta">
    <location>
        <begin position="1"/>
        <end position="122"/>
    </location>
</feature>
<feature type="region of interest" description="Disordered" evidence="2">
    <location>
        <begin position="92"/>
        <end position="122"/>
    </location>
</feature>
<sequence length="122" mass="13238">MRPGEIITGDGPVPLNPGRPRVRITVVNRADRAVQVGSHYHFAAVNEGLEFDRAAAWGHRLDVPAGTAVRFEPGVEREVRLVPVGGSRRVPGLRPEYAGELDGRGHEPTAPNYGEKGQGHFE</sequence>
<dbReference type="EC" id="3.5.1.5" evidence="1"/>
<dbReference type="EMBL" id="AM420293">
    <property type="protein sequence ID" value="CAL99980.1"/>
    <property type="molecule type" value="Genomic_DNA"/>
</dbReference>
<dbReference type="RefSeq" id="WP_009950042.1">
    <property type="nucleotide sequence ID" value="NC_009142.1"/>
</dbReference>
<dbReference type="SMR" id="A4F7F6"/>
<dbReference type="STRING" id="405948.SACE_0635"/>
<dbReference type="KEGG" id="sen:SACE_0635"/>
<dbReference type="eggNOG" id="COG0832">
    <property type="taxonomic scope" value="Bacteria"/>
</dbReference>
<dbReference type="HOGENOM" id="CLU_129707_1_1_11"/>
<dbReference type="OrthoDB" id="9797217at2"/>
<dbReference type="UniPathway" id="UPA00258">
    <property type="reaction ID" value="UER00370"/>
</dbReference>
<dbReference type="Proteomes" id="UP000006728">
    <property type="component" value="Chromosome"/>
</dbReference>
<dbReference type="GO" id="GO:0035550">
    <property type="term" value="C:urease complex"/>
    <property type="evidence" value="ECO:0007669"/>
    <property type="project" value="InterPro"/>
</dbReference>
<dbReference type="GO" id="GO:0009039">
    <property type="term" value="F:urease activity"/>
    <property type="evidence" value="ECO:0007669"/>
    <property type="project" value="UniProtKB-UniRule"/>
</dbReference>
<dbReference type="GO" id="GO:0043419">
    <property type="term" value="P:urea catabolic process"/>
    <property type="evidence" value="ECO:0007669"/>
    <property type="project" value="UniProtKB-UniRule"/>
</dbReference>
<dbReference type="CDD" id="cd00407">
    <property type="entry name" value="Urease_beta"/>
    <property type="match status" value="1"/>
</dbReference>
<dbReference type="Gene3D" id="2.10.150.10">
    <property type="entry name" value="Urease, beta subunit"/>
    <property type="match status" value="1"/>
</dbReference>
<dbReference type="HAMAP" id="MF_01954">
    <property type="entry name" value="Urease_beta"/>
    <property type="match status" value="1"/>
</dbReference>
<dbReference type="InterPro" id="IPR002019">
    <property type="entry name" value="Urease_beta-like"/>
</dbReference>
<dbReference type="InterPro" id="IPR036461">
    <property type="entry name" value="Urease_betasu_sf"/>
</dbReference>
<dbReference type="InterPro" id="IPR050069">
    <property type="entry name" value="Urease_subunit"/>
</dbReference>
<dbReference type="NCBIfam" id="NF009682">
    <property type="entry name" value="PRK13203.1"/>
    <property type="match status" value="1"/>
</dbReference>
<dbReference type="NCBIfam" id="TIGR00192">
    <property type="entry name" value="urease_beta"/>
    <property type="match status" value="1"/>
</dbReference>
<dbReference type="PANTHER" id="PTHR33569">
    <property type="entry name" value="UREASE"/>
    <property type="match status" value="1"/>
</dbReference>
<dbReference type="PANTHER" id="PTHR33569:SF1">
    <property type="entry name" value="UREASE"/>
    <property type="match status" value="1"/>
</dbReference>
<dbReference type="Pfam" id="PF00699">
    <property type="entry name" value="Urease_beta"/>
    <property type="match status" value="1"/>
</dbReference>
<dbReference type="SUPFAM" id="SSF51278">
    <property type="entry name" value="Urease, beta-subunit"/>
    <property type="match status" value="1"/>
</dbReference>
<gene>
    <name evidence="1" type="primary">ureB</name>
    <name type="ordered locus">SACE_0635</name>
</gene>
<reference key="1">
    <citation type="journal article" date="2007" name="Nat. Biotechnol.">
        <title>Complete genome sequence of the erythromycin-producing bacterium Saccharopolyspora erythraea NRRL23338.</title>
        <authorList>
            <person name="Oliynyk M."/>
            <person name="Samborskyy M."/>
            <person name="Lester J.B."/>
            <person name="Mironenko T."/>
            <person name="Scott N."/>
            <person name="Dickens S."/>
            <person name="Haydock S.F."/>
            <person name="Leadlay P.F."/>
        </authorList>
    </citation>
    <scope>NUCLEOTIDE SEQUENCE [LARGE SCALE GENOMIC DNA]</scope>
    <source>
        <strain>ATCC 11635 / DSM 40517 / JCM 4748 / NBRC 13426 / NCIMB 8594 / NRRL 2338</strain>
    </source>
</reference>